<keyword id="KW-0007">Acetylation</keyword>
<keyword id="KW-0963">Cytoplasm</keyword>
<keyword id="KW-0312">Gluconeogenesis</keyword>
<keyword id="KW-0324">Glycolysis</keyword>
<keyword id="KW-0413">Isomerase</keyword>
<keyword id="KW-1185">Reference proteome</keyword>
<sequence>MKNINPTQTAAWQALQKHFDEMKDVTIADLFAKDGDRFSKFSATFDDQMLVDYSKNRITEETLAKLQDLAKECDLAGAIKSMFSGEKINRTENRAVLHVALRNRSNTPILVDGKDVMPEVNAVLEKMKTFSEAIISGEWKGYTGKAITDVVNIGIGGSDLGPYMVTEALRPYKNHLNMHFVSNVDGTHIAEVLKKVNPETTLFLVASKTFTTQETMTNAHSARDWFLKAAGDEKHVAKHFAALSTNAKAVGEFGIDTANMFEFWDWVGGRYSLWSAIGLSIVLSIGFDNFVELLSGAHAMDKHFSTTPAEKNLPVLLALIGIWYNNFFGAETEAILPYDQYMHRFAAYFQQGNMESNGKYVDRNGKVVDYQTGPIIWGEPGTNGQHAFYQLIHQGTKMVPCDFIAPAITHNPLSDHHQKLLSNFFAQTEALAFGKSREVVEQEYRDQGKDPATLDYVVPFKVFEGNRPTNSILLREITPFSLGALIALYEHKIFTQGVILNIFTFDQWGVELGKQLANRILPELKDDKEISSHDSSTNGLINRYKAWRG</sequence>
<protein>
    <recommendedName>
        <fullName evidence="1">Glucose-6-phosphate isomerase</fullName>
        <shortName evidence="1">GPI</shortName>
        <ecNumber evidence="1">5.3.1.9</ecNumber>
    </recommendedName>
    <alternativeName>
        <fullName evidence="1">Phosphoglucose isomerase</fullName>
        <shortName evidence="1">PGI</shortName>
    </alternativeName>
    <alternativeName>
        <fullName evidence="1">Phosphohexose isomerase</fullName>
        <shortName evidence="1">PHI</shortName>
    </alternativeName>
</protein>
<dbReference type="EC" id="5.3.1.9" evidence="1"/>
<dbReference type="EMBL" id="AE014075">
    <property type="protein sequence ID" value="AAN83417.1"/>
    <property type="status" value="ALT_INIT"/>
    <property type="molecule type" value="Genomic_DNA"/>
</dbReference>
<dbReference type="RefSeq" id="WP_000789981.1">
    <property type="nucleotide sequence ID" value="NZ_CP051263.1"/>
</dbReference>
<dbReference type="SMR" id="Q8FB44"/>
<dbReference type="STRING" id="199310.c4991"/>
<dbReference type="KEGG" id="ecc:c4991"/>
<dbReference type="eggNOG" id="COG0166">
    <property type="taxonomic scope" value="Bacteria"/>
</dbReference>
<dbReference type="HOGENOM" id="CLU_017947_3_1_6"/>
<dbReference type="UniPathway" id="UPA00109">
    <property type="reaction ID" value="UER00181"/>
</dbReference>
<dbReference type="UniPathway" id="UPA00138"/>
<dbReference type="Proteomes" id="UP000001410">
    <property type="component" value="Chromosome"/>
</dbReference>
<dbReference type="GO" id="GO:0005829">
    <property type="term" value="C:cytosol"/>
    <property type="evidence" value="ECO:0007669"/>
    <property type="project" value="TreeGrafter"/>
</dbReference>
<dbReference type="GO" id="GO:0097367">
    <property type="term" value="F:carbohydrate derivative binding"/>
    <property type="evidence" value="ECO:0007669"/>
    <property type="project" value="InterPro"/>
</dbReference>
<dbReference type="GO" id="GO:0004347">
    <property type="term" value="F:glucose-6-phosphate isomerase activity"/>
    <property type="evidence" value="ECO:0007669"/>
    <property type="project" value="UniProtKB-UniRule"/>
</dbReference>
<dbReference type="GO" id="GO:0048029">
    <property type="term" value="F:monosaccharide binding"/>
    <property type="evidence" value="ECO:0007669"/>
    <property type="project" value="TreeGrafter"/>
</dbReference>
<dbReference type="GO" id="GO:0006094">
    <property type="term" value="P:gluconeogenesis"/>
    <property type="evidence" value="ECO:0007669"/>
    <property type="project" value="UniProtKB-UniRule"/>
</dbReference>
<dbReference type="GO" id="GO:0051156">
    <property type="term" value="P:glucose 6-phosphate metabolic process"/>
    <property type="evidence" value="ECO:0007669"/>
    <property type="project" value="TreeGrafter"/>
</dbReference>
<dbReference type="GO" id="GO:0006096">
    <property type="term" value="P:glycolytic process"/>
    <property type="evidence" value="ECO:0007669"/>
    <property type="project" value="UniProtKB-UniRule"/>
</dbReference>
<dbReference type="CDD" id="cd05015">
    <property type="entry name" value="SIS_PGI_1"/>
    <property type="match status" value="1"/>
</dbReference>
<dbReference type="CDD" id="cd05016">
    <property type="entry name" value="SIS_PGI_2"/>
    <property type="match status" value="1"/>
</dbReference>
<dbReference type="FunFam" id="1.10.1390.10:FF:000001">
    <property type="entry name" value="Glucose-6-phosphate isomerase"/>
    <property type="match status" value="1"/>
</dbReference>
<dbReference type="FunFam" id="3.40.50.10490:FF:000004">
    <property type="entry name" value="Glucose-6-phosphate isomerase"/>
    <property type="match status" value="1"/>
</dbReference>
<dbReference type="Gene3D" id="1.10.1390.10">
    <property type="match status" value="1"/>
</dbReference>
<dbReference type="Gene3D" id="3.40.50.10490">
    <property type="entry name" value="Glucose-6-phosphate isomerase like protein, domain 1"/>
    <property type="match status" value="2"/>
</dbReference>
<dbReference type="HAMAP" id="MF_00473">
    <property type="entry name" value="G6P_isomerase"/>
    <property type="match status" value="1"/>
</dbReference>
<dbReference type="InterPro" id="IPR001672">
    <property type="entry name" value="G6P_Isomerase"/>
</dbReference>
<dbReference type="InterPro" id="IPR023096">
    <property type="entry name" value="G6P_Isomerase_C"/>
</dbReference>
<dbReference type="InterPro" id="IPR018189">
    <property type="entry name" value="Phosphoglucose_isomerase_CS"/>
</dbReference>
<dbReference type="InterPro" id="IPR046348">
    <property type="entry name" value="SIS_dom_sf"/>
</dbReference>
<dbReference type="InterPro" id="IPR035476">
    <property type="entry name" value="SIS_PGI_1"/>
</dbReference>
<dbReference type="InterPro" id="IPR035482">
    <property type="entry name" value="SIS_PGI_2"/>
</dbReference>
<dbReference type="NCBIfam" id="NF001211">
    <property type="entry name" value="PRK00179.1"/>
    <property type="match status" value="1"/>
</dbReference>
<dbReference type="PANTHER" id="PTHR11469">
    <property type="entry name" value="GLUCOSE-6-PHOSPHATE ISOMERASE"/>
    <property type="match status" value="1"/>
</dbReference>
<dbReference type="PANTHER" id="PTHR11469:SF1">
    <property type="entry name" value="GLUCOSE-6-PHOSPHATE ISOMERASE"/>
    <property type="match status" value="1"/>
</dbReference>
<dbReference type="Pfam" id="PF00342">
    <property type="entry name" value="PGI"/>
    <property type="match status" value="1"/>
</dbReference>
<dbReference type="PRINTS" id="PR00662">
    <property type="entry name" value="G6PISOMERASE"/>
</dbReference>
<dbReference type="SUPFAM" id="SSF53697">
    <property type="entry name" value="SIS domain"/>
    <property type="match status" value="1"/>
</dbReference>
<dbReference type="PROSITE" id="PS00765">
    <property type="entry name" value="P_GLUCOSE_ISOMERASE_1"/>
    <property type="match status" value="1"/>
</dbReference>
<dbReference type="PROSITE" id="PS00174">
    <property type="entry name" value="P_GLUCOSE_ISOMERASE_2"/>
    <property type="match status" value="1"/>
</dbReference>
<dbReference type="PROSITE" id="PS51463">
    <property type="entry name" value="P_GLUCOSE_ISOMERASE_3"/>
    <property type="match status" value="1"/>
</dbReference>
<comment type="function">
    <text evidence="1">Catalyzes the reversible isomerization of glucose-6-phosphate to fructose-6-phosphate.</text>
</comment>
<comment type="catalytic activity">
    <reaction evidence="1">
        <text>alpha-D-glucose 6-phosphate = beta-D-fructose 6-phosphate</text>
        <dbReference type="Rhea" id="RHEA:11816"/>
        <dbReference type="ChEBI" id="CHEBI:57634"/>
        <dbReference type="ChEBI" id="CHEBI:58225"/>
        <dbReference type="EC" id="5.3.1.9"/>
    </reaction>
</comment>
<comment type="pathway">
    <text evidence="1">Carbohydrate biosynthesis; gluconeogenesis.</text>
</comment>
<comment type="pathway">
    <text evidence="1">Carbohydrate degradation; glycolysis; D-glyceraldehyde 3-phosphate and glycerone phosphate from D-glucose: step 2/4.</text>
</comment>
<comment type="subcellular location">
    <subcellularLocation>
        <location evidence="1">Cytoplasm</location>
    </subcellularLocation>
</comment>
<comment type="similarity">
    <text evidence="1">Belongs to the GPI family.</text>
</comment>
<comment type="sequence caution" evidence="2">
    <conflict type="erroneous initiation">
        <sequence resource="EMBL-CDS" id="AAN83417"/>
    </conflict>
</comment>
<feature type="chain" id="PRO_0000180643" description="Glucose-6-phosphate isomerase">
    <location>
        <begin position="1"/>
        <end position="549"/>
    </location>
</feature>
<feature type="active site" description="Proton donor" evidence="1">
    <location>
        <position position="355"/>
    </location>
</feature>
<feature type="active site" evidence="1">
    <location>
        <position position="386"/>
    </location>
</feature>
<feature type="active site" evidence="1">
    <location>
        <position position="514"/>
    </location>
</feature>
<feature type="modified residue" description="N6-acetyllysine" evidence="1">
    <location>
        <position position="80"/>
    </location>
</feature>
<feature type="modified residue" description="N6-acetyllysine" evidence="1">
    <location>
        <position position="228"/>
    </location>
</feature>
<feature type="modified residue" description="N6-acetyllysine" evidence="1">
    <location>
        <position position="234"/>
    </location>
</feature>
<organism>
    <name type="scientific">Escherichia coli O6:H1 (strain CFT073 / ATCC 700928 / UPEC)</name>
    <dbReference type="NCBI Taxonomy" id="199310"/>
    <lineage>
        <taxon>Bacteria</taxon>
        <taxon>Pseudomonadati</taxon>
        <taxon>Pseudomonadota</taxon>
        <taxon>Gammaproteobacteria</taxon>
        <taxon>Enterobacterales</taxon>
        <taxon>Enterobacteriaceae</taxon>
        <taxon>Escherichia</taxon>
    </lineage>
</organism>
<gene>
    <name evidence="1" type="primary">pgi</name>
    <name type="ordered locus">c4991</name>
</gene>
<accession>Q8FB44</accession>
<reference key="1">
    <citation type="journal article" date="2002" name="Proc. Natl. Acad. Sci. U.S.A.">
        <title>Extensive mosaic structure revealed by the complete genome sequence of uropathogenic Escherichia coli.</title>
        <authorList>
            <person name="Welch R.A."/>
            <person name="Burland V."/>
            <person name="Plunkett G. III"/>
            <person name="Redford P."/>
            <person name="Roesch P."/>
            <person name="Rasko D."/>
            <person name="Buckles E.L."/>
            <person name="Liou S.-R."/>
            <person name="Boutin A."/>
            <person name="Hackett J."/>
            <person name="Stroud D."/>
            <person name="Mayhew G.F."/>
            <person name="Rose D.J."/>
            <person name="Zhou S."/>
            <person name="Schwartz D.C."/>
            <person name="Perna N.T."/>
            <person name="Mobley H.L.T."/>
            <person name="Donnenberg M.S."/>
            <person name="Blattner F.R."/>
        </authorList>
    </citation>
    <scope>NUCLEOTIDE SEQUENCE [LARGE SCALE GENOMIC DNA]</scope>
    <source>
        <strain>CFT073 / ATCC 700928 / UPEC</strain>
    </source>
</reference>
<name>G6PI_ECOL6</name>
<evidence type="ECO:0000255" key="1">
    <source>
        <dbReference type="HAMAP-Rule" id="MF_00473"/>
    </source>
</evidence>
<evidence type="ECO:0000305" key="2"/>
<proteinExistence type="inferred from homology"/>